<keyword id="KW-0963">Cytoplasm</keyword>
<keyword id="KW-0238">DNA-binding</keyword>
<protein>
    <recommendedName>
        <fullName evidence="1">Nucleoid-associated protein SAUSA300_0453</fullName>
    </recommendedName>
</protein>
<accession>Q2FJG3</accession>
<comment type="function">
    <text evidence="1">Binds to DNA and alters its conformation. May be involved in regulation of gene expression, nucleoid organization and DNA protection.</text>
</comment>
<comment type="subunit">
    <text evidence="1">Homodimer.</text>
</comment>
<comment type="subcellular location">
    <subcellularLocation>
        <location evidence="1">Cytoplasm</location>
        <location evidence="1">Nucleoid</location>
    </subcellularLocation>
</comment>
<comment type="similarity">
    <text evidence="1">Belongs to the YbaB/EbfC family.</text>
</comment>
<gene>
    <name type="ordered locus">SAUSA300_0453</name>
</gene>
<proteinExistence type="inferred from homology"/>
<organism>
    <name type="scientific">Staphylococcus aureus (strain USA300)</name>
    <dbReference type="NCBI Taxonomy" id="367830"/>
    <lineage>
        <taxon>Bacteria</taxon>
        <taxon>Bacillati</taxon>
        <taxon>Bacillota</taxon>
        <taxon>Bacilli</taxon>
        <taxon>Bacillales</taxon>
        <taxon>Staphylococcaceae</taxon>
        <taxon>Staphylococcus</taxon>
    </lineage>
</organism>
<name>Y453_STAA3</name>
<feature type="chain" id="PRO_1000003831" description="Nucleoid-associated protein SAUSA300_0453">
    <location>
        <begin position="1"/>
        <end position="105"/>
    </location>
</feature>
<feature type="region of interest" description="Disordered" evidence="2">
    <location>
        <begin position="1"/>
        <end position="33"/>
    </location>
</feature>
<feature type="compositionally biased region" description="Low complexity" evidence="2">
    <location>
        <begin position="7"/>
        <end position="16"/>
    </location>
</feature>
<feature type="compositionally biased region" description="Basic and acidic residues" evidence="2">
    <location>
        <begin position="21"/>
        <end position="33"/>
    </location>
</feature>
<evidence type="ECO:0000255" key="1">
    <source>
        <dbReference type="HAMAP-Rule" id="MF_00274"/>
    </source>
</evidence>
<evidence type="ECO:0000256" key="2">
    <source>
        <dbReference type="SAM" id="MobiDB-lite"/>
    </source>
</evidence>
<sequence length="105" mass="11597">MRGGGNMQQMMKQMQKMQKKMAQEQEKLKEERIVGTAGGGMVAVTVTGHKEVVDVEIKEEAVDPDDIEMLQDLVLAATNEAMNKADELTQERLGKHTQGLNIPGM</sequence>
<reference key="1">
    <citation type="journal article" date="2006" name="Lancet">
        <title>Complete genome sequence of USA300, an epidemic clone of community-acquired meticillin-resistant Staphylococcus aureus.</title>
        <authorList>
            <person name="Diep B.A."/>
            <person name="Gill S.R."/>
            <person name="Chang R.F."/>
            <person name="Phan T.H."/>
            <person name="Chen J.H."/>
            <person name="Davidson M.G."/>
            <person name="Lin F."/>
            <person name="Lin J."/>
            <person name="Carleton H.A."/>
            <person name="Mongodin E.F."/>
            <person name="Sensabaugh G.F."/>
            <person name="Perdreau-Remington F."/>
        </authorList>
    </citation>
    <scope>NUCLEOTIDE SEQUENCE [LARGE SCALE GENOMIC DNA]</scope>
    <source>
        <strain>USA300</strain>
    </source>
</reference>
<dbReference type="EMBL" id="CP000255">
    <property type="protein sequence ID" value="ABD21437.1"/>
    <property type="molecule type" value="Genomic_DNA"/>
</dbReference>
<dbReference type="RefSeq" id="WP_001213992.1">
    <property type="nucleotide sequence ID" value="NZ_CP027476.1"/>
</dbReference>
<dbReference type="SMR" id="Q2FJG3"/>
<dbReference type="KEGG" id="saa:SAUSA300_0453"/>
<dbReference type="HOGENOM" id="CLU_140930_1_0_9"/>
<dbReference type="OMA" id="MGNMMKQ"/>
<dbReference type="Proteomes" id="UP000001939">
    <property type="component" value="Chromosome"/>
</dbReference>
<dbReference type="GO" id="GO:0043590">
    <property type="term" value="C:bacterial nucleoid"/>
    <property type="evidence" value="ECO:0007669"/>
    <property type="project" value="UniProtKB-UniRule"/>
</dbReference>
<dbReference type="GO" id="GO:0005829">
    <property type="term" value="C:cytosol"/>
    <property type="evidence" value="ECO:0007669"/>
    <property type="project" value="TreeGrafter"/>
</dbReference>
<dbReference type="GO" id="GO:0003677">
    <property type="term" value="F:DNA binding"/>
    <property type="evidence" value="ECO:0007669"/>
    <property type="project" value="UniProtKB-UniRule"/>
</dbReference>
<dbReference type="FunFam" id="3.30.1310.10:FF:000002">
    <property type="entry name" value="Nucleoid-associated protein IKC_06587"/>
    <property type="match status" value="1"/>
</dbReference>
<dbReference type="Gene3D" id="3.30.1310.10">
    <property type="entry name" value="Nucleoid-associated protein YbaB-like domain"/>
    <property type="match status" value="1"/>
</dbReference>
<dbReference type="HAMAP" id="MF_00274">
    <property type="entry name" value="DNA_YbaB_EbfC"/>
    <property type="match status" value="1"/>
</dbReference>
<dbReference type="InterPro" id="IPR036894">
    <property type="entry name" value="YbaB-like_sf"/>
</dbReference>
<dbReference type="InterPro" id="IPR004401">
    <property type="entry name" value="YbaB/EbfC"/>
</dbReference>
<dbReference type="NCBIfam" id="TIGR00103">
    <property type="entry name" value="DNA_YbaB_EbfC"/>
    <property type="match status" value="1"/>
</dbReference>
<dbReference type="PANTHER" id="PTHR33449">
    <property type="entry name" value="NUCLEOID-ASSOCIATED PROTEIN YBAB"/>
    <property type="match status" value="1"/>
</dbReference>
<dbReference type="PANTHER" id="PTHR33449:SF1">
    <property type="entry name" value="NUCLEOID-ASSOCIATED PROTEIN YBAB"/>
    <property type="match status" value="1"/>
</dbReference>
<dbReference type="Pfam" id="PF02575">
    <property type="entry name" value="YbaB_DNA_bd"/>
    <property type="match status" value="1"/>
</dbReference>
<dbReference type="PIRSF" id="PIRSF004555">
    <property type="entry name" value="UCP004555"/>
    <property type="match status" value="1"/>
</dbReference>
<dbReference type="SUPFAM" id="SSF82607">
    <property type="entry name" value="YbaB-like"/>
    <property type="match status" value="1"/>
</dbReference>